<evidence type="ECO:0000250" key="1"/>
<evidence type="ECO:0000255" key="2"/>
<evidence type="ECO:0000255" key="3">
    <source>
        <dbReference type="PROSITE-ProRule" id="PRU00648"/>
    </source>
</evidence>
<evidence type="ECO:0000256" key="4">
    <source>
        <dbReference type="SAM" id="MobiDB-lite"/>
    </source>
</evidence>
<evidence type="ECO:0000305" key="5"/>
<reference key="1">
    <citation type="journal article" date="2002" name="Proc. Natl. Acad. Sci. U.S.A.">
        <title>Extensive mosaic structure revealed by the complete genome sequence of uropathogenic Escherichia coli.</title>
        <authorList>
            <person name="Welch R.A."/>
            <person name="Burland V."/>
            <person name="Plunkett G. III"/>
            <person name="Redford P."/>
            <person name="Roesch P."/>
            <person name="Rasko D."/>
            <person name="Buckles E.L."/>
            <person name="Liou S.-R."/>
            <person name="Boutin A."/>
            <person name="Hackett J."/>
            <person name="Stroud D."/>
            <person name="Mayhew G.F."/>
            <person name="Rose D.J."/>
            <person name="Zhou S."/>
            <person name="Schwartz D.C."/>
            <person name="Perna N.T."/>
            <person name="Mobley H.L.T."/>
            <person name="Donnenberg M.S."/>
            <person name="Blattner F.R."/>
        </authorList>
    </citation>
    <scope>NUCLEOTIDE SEQUENCE [LARGE SCALE GENOMIC DNA]</scope>
    <source>
        <strain>CFT073 / ATCC 700928 / UPEC</strain>
    </source>
</reference>
<gene>
    <name type="primary">amiC</name>
    <name type="ordered locus">c3411</name>
</gene>
<proteinExistence type="inferred from homology"/>
<accession>P63884</accession>
<accession>Q46929</accession>
<sequence length="417" mass="45634">MSGSNTAISRRRLLQGAGAMWLLSVSQVSLAAVSQVVAVRVWPASSYTRVTVESNRQLKYKQFALSNPERVVVDIEDVNLNSVLKGMAAQIRADDPFIKSARVGQFDPQTVRMVFELKQNVKPQLFALAPVAGFKERLVMDLYPANAQDMQDPLLALLEDYNKGDLEKQVPPAQSGPQPGKAGRDRPIVIMLDPGHGGEDSGAVGKYKTREKDVVLQIARRLRSLIEKEGNMKVYMTRNEDIFIPLQVRVAKAQKQRADLFVSIHADAFTSRQPSGSSVFALSTKGATSTAAKYLAQTQNASDLIGGVSKSGDRYVDHTMFDMVQSLTIADSLKFGKAVLNKLGKINKLHKNQVEQAGFAVLKAPDIPSILVETAFISNVEEERKLKTATFQQEVAESILAGIKAYFADGATLARRG</sequence>
<protein>
    <recommendedName>
        <fullName>N-acetylmuramoyl-L-alanine amidase AmiC</fullName>
        <ecNumber>3.5.1.28</ecNumber>
    </recommendedName>
</protein>
<feature type="signal peptide" description="Tat-type signal" evidence="3">
    <location>
        <begin position="1"/>
        <end position="31"/>
    </location>
</feature>
<feature type="chain" id="PRO_0000006466" description="N-acetylmuramoyl-L-alanine amidase AmiC">
    <location>
        <begin position="32"/>
        <end position="417"/>
    </location>
</feature>
<feature type="domain" description="MurNAc-LAA" evidence="2">
    <location>
        <begin position="190"/>
        <end position="404"/>
    </location>
</feature>
<feature type="region of interest" description="Disordered" evidence="4">
    <location>
        <begin position="166"/>
        <end position="185"/>
    </location>
</feature>
<keyword id="KW-0961">Cell wall biogenesis/degradation</keyword>
<keyword id="KW-0378">Hydrolase</keyword>
<keyword id="KW-0574">Periplasm</keyword>
<keyword id="KW-1185">Reference proteome</keyword>
<keyword id="KW-0732">Signal</keyword>
<dbReference type="EC" id="3.5.1.28"/>
<dbReference type="EMBL" id="AE014075">
    <property type="protein sequence ID" value="AAN81856.1"/>
    <property type="status" value="ALT_INIT"/>
    <property type="molecule type" value="Genomic_DNA"/>
</dbReference>
<dbReference type="RefSeq" id="WP_000016907.1">
    <property type="nucleotide sequence ID" value="NZ_CP051263.1"/>
</dbReference>
<dbReference type="SMR" id="P63884"/>
<dbReference type="STRING" id="199310.c3411"/>
<dbReference type="GeneID" id="93779181"/>
<dbReference type="KEGG" id="ecc:c3411"/>
<dbReference type="eggNOG" id="COG0860">
    <property type="taxonomic scope" value="Bacteria"/>
</dbReference>
<dbReference type="HOGENOM" id="CLU_014322_2_2_6"/>
<dbReference type="Proteomes" id="UP000001410">
    <property type="component" value="Chromosome"/>
</dbReference>
<dbReference type="GO" id="GO:0030288">
    <property type="term" value="C:outer membrane-bounded periplasmic space"/>
    <property type="evidence" value="ECO:0007669"/>
    <property type="project" value="TreeGrafter"/>
</dbReference>
<dbReference type="GO" id="GO:0008745">
    <property type="term" value="F:N-acetylmuramoyl-L-alanine amidase activity"/>
    <property type="evidence" value="ECO:0007669"/>
    <property type="project" value="UniProtKB-EC"/>
</dbReference>
<dbReference type="GO" id="GO:0071555">
    <property type="term" value="P:cell wall organization"/>
    <property type="evidence" value="ECO:0007669"/>
    <property type="project" value="UniProtKB-KW"/>
</dbReference>
<dbReference type="GO" id="GO:0009253">
    <property type="term" value="P:peptidoglycan catabolic process"/>
    <property type="evidence" value="ECO:0007669"/>
    <property type="project" value="InterPro"/>
</dbReference>
<dbReference type="CDD" id="cd02696">
    <property type="entry name" value="MurNAc-LAA"/>
    <property type="match status" value="1"/>
</dbReference>
<dbReference type="FunFam" id="2.60.40.3500:FF:000001">
    <property type="entry name" value="N-acetylmuramoyl-L-alanine amidase"/>
    <property type="match status" value="1"/>
</dbReference>
<dbReference type="FunFam" id="3.40.630.40:FF:000001">
    <property type="entry name" value="N-acetylmuramoyl-L-alanine amidase"/>
    <property type="match status" value="1"/>
</dbReference>
<dbReference type="Gene3D" id="2.60.40.3500">
    <property type="match status" value="1"/>
</dbReference>
<dbReference type="Gene3D" id="3.40.630.40">
    <property type="entry name" value="Zn-dependent exopeptidases"/>
    <property type="match status" value="1"/>
</dbReference>
<dbReference type="InterPro" id="IPR049745">
    <property type="entry name" value="AmiC"/>
</dbReference>
<dbReference type="InterPro" id="IPR021731">
    <property type="entry name" value="AMIN_dom"/>
</dbReference>
<dbReference type="InterPro" id="IPR002508">
    <property type="entry name" value="MurNAc-LAA_cat"/>
</dbReference>
<dbReference type="InterPro" id="IPR050695">
    <property type="entry name" value="N-acetylmuramoyl_amidase_3"/>
</dbReference>
<dbReference type="InterPro" id="IPR006311">
    <property type="entry name" value="TAT_signal"/>
</dbReference>
<dbReference type="NCBIfam" id="NF038267">
    <property type="entry name" value="amidase_AmiC"/>
    <property type="match status" value="1"/>
</dbReference>
<dbReference type="PANTHER" id="PTHR30404">
    <property type="entry name" value="N-ACETYLMURAMOYL-L-ALANINE AMIDASE"/>
    <property type="match status" value="1"/>
</dbReference>
<dbReference type="PANTHER" id="PTHR30404:SF0">
    <property type="entry name" value="N-ACETYLMURAMOYL-L-ALANINE AMIDASE AMIC"/>
    <property type="match status" value="1"/>
</dbReference>
<dbReference type="Pfam" id="PF01520">
    <property type="entry name" value="Amidase_3"/>
    <property type="match status" value="1"/>
</dbReference>
<dbReference type="Pfam" id="PF11741">
    <property type="entry name" value="AMIN"/>
    <property type="match status" value="1"/>
</dbReference>
<dbReference type="SMART" id="SM00646">
    <property type="entry name" value="Ami_3"/>
    <property type="match status" value="1"/>
</dbReference>
<dbReference type="SUPFAM" id="SSF53187">
    <property type="entry name" value="Zn-dependent exopeptidases"/>
    <property type="match status" value="1"/>
</dbReference>
<dbReference type="PROSITE" id="PS51318">
    <property type="entry name" value="TAT"/>
    <property type="match status" value="1"/>
</dbReference>
<organism>
    <name type="scientific">Escherichia coli O6:H1 (strain CFT073 / ATCC 700928 / UPEC)</name>
    <dbReference type="NCBI Taxonomy" id="199310"/>
    <lineage>
        <taxon>Bacteria</taxon>
        <taxon>Pseudomonadati</taxon>
        <taxon>Pseudomonadota</taxon>
        <taxon>Gammaproteobacteria</taxon>
        <taxon>Enterobacterales</taxon>
        <taxon>Enterobacteriaceae</taxon>
        <taxon>Escherichia</taxon>
    </lineage>
</organism>
<comment type="function">
    <text evidence="1">Cell-wall hydrolase involved in septum cleavage during cell division.</text>
</comment>
<comment type="catalytic activity">
    <reaction>
        <text>Hydrolyzes the link between N-acetylmuramoyl residues and L-amino acid residues in certain cell-wall glycopeptides.</text>
        <dbReference type="EC" id="3.5.1.28"/>
    </reaction>
</comment>
<comment type="subcellular location">
    <subcellularLocation>
        <location evidence="1">Periplasm</location>
    </subcellularLocation>
</comment>
<comment type="PTM">
    <text>Predicted to be exported by the Tat system. The position of the signal peptide cleavage has not been experimentally proven.</text>
</comment>
<comment type="similarity">
    <text evidence="5">Belongs to the N-acetylmuramoyl-L-alanine amidase 3 family.</text>
</comment>
<comment type="sequence caution" evidence="5">
    <conflict type="erroneous initiation">
        <sequence resource="EMBL-CDS" id="AAN81856"/>
    </conflict>
    <text>Extended N-terminus.</text>
</comment>
<name>AMIC_ECOL6</name>